<feature type="chain" id="PRO_0000354536" description="Large ribosomal subunit protein uL22">
    <location>
        <begin position="1"/>
        <end position="281"/>
    </location>
</feature>
<feature type="region of interest" description="Large ribosomal subunit protein uL22" evidence="1">
    <location>
        <begin position="1"/>
        <end position="225"/>
    </location>
</feature>
<feature type="region of interest" description="Disordered" evidence="2">
    <location>
        <begin position="137"/>
        <end position="175"/>
    </location>
</feature>
<feature type="region of interest" description="Disordered" evidence="2">
    <location>
        <begin position="199"/>
        <end position="281"/>
    </location>
</feature>
<feature type="region of interest" description="Unknown">
    <location>
        <begin position="226"/>
        <end position="281"/>
    </location>
</feature>
<feature type="compositionally biased region" description="Basic residues" evidence="2">
    <location>
        <begin position="139"/>
        <end position="153"/>
    </location>
</feature>
<feature type="compositionally biased region" description="Low complexity" evidence="2">
    <location>
        <begin position="159"/>
        <end position="175"/>
    </location>
</feature>
<feature type="compositionally biased region" description="Low complexity" evidence="2">
    <location>
        <begin position="199"/>
        <end position="239"/>
    </location>
</feature>
<feature type="compositionally biased region" description="Basic and acidic residues" evidence="2">
    <location>
        <begin position="261"/>
        <end position="271"/>
    </location>
</feature>
<feature type="compositionally biased region" description="Acidic residues" evidence="2">
    <location>
        <begin position="272"/>
        <end position="281"/>
    </location>
</feature>
<reference key="1">
    <citation type="journal article" date="2009" name="Genome Res.">
        <title>Complete genome of the cellulolytic thermophile Acidothermus cellulolyticus 11B provides insights into its ecophysiological and evolutionary adaptations.</title>
        <authorList>
            <person name="Barabote R.D."/>
            <person name="Xie G."/>
            <person name="Leu D.H."/>
            <person name="Normand P."/>
            <person name="Necsulea A."/>
            <person name="Daubin V."/>
            <person name="Medigue C."/>
            <person name="Adney W.S."/>
            <person name="Xu X.C."/>
            <person name="Lapidus A."/>
            <person name="Parales R.E."/>
            <person name="Detter C."/>
            <person name="Pujic P."/>
            <person name="Bruce D."/>
            <person name="Lavire C."/>
            <person name="Challacombe J.F."/>
            <person name="Brettin T.S."/>
            <person name="Berry A.M."/>
        </authorList>
    </citation>
    <scope>NUCLEOTIDE SEQUENCE [LARGE SCALE GENOMIC DNA]</scope>
    <source>
        <strain>ATCC 43068 / DSM 8971 / 11B</strain>
    </source>
</reference>
<evidence type="ECO:0000255" key="1">
    <source>
        <dbReference type="HAMAP-Rule" id="MF_01331"/>
    </source>
</evidence>
<evidence type="ECO:0000256" key="2">
    <source>
        <dbReference type="SAM" id="MobiDB-lite"/>
    </source>
</evidence>
<gene>
    <name evidence="1" type="primary">rplV</name>
    <name type="ordered locus">Acel_0311</name>
</gene>
<proteinExistence type="inferred from homology"/>
<protein>
    <recommendedName>
        <fullName evidence="1">Large ribosomal subunit protein uL22</fullName>
    </recommendedName>
    <alternativeName>
        <fullName>50S ribosomal protein L22</fullName>
    </alternativeName>
</protein>
<accession>A0LRM5</accession>
<dbReference type="EMBL" id="CP000481">
    <property type="protein sequence ID" value="ABK52085.1"/>
    <property type="molecule type" value="Genomic_DNA"/>
</dbReference>
<dbReference type="SMR" id="A0LRM5"/>
<dbReference type="STRING" id="351607.Acel_0311"/>
<dbReference type="KEGG" id="ace:Acel_0311"/>
<dbReference type="eggNOG" id="COG0091">
    <property type="taxonomic scope" value="Bacteria"/>
</dbReference>
<dbReference type="HOGENOM" id="CLU_989112_0_0_11"/>
<dbReference type="InParanoid" id="A0LRM5"/>
<dbReference type="Proteomes" id="UP000008221">
    <property type="component" value="Chromosome"/>
</dbReference>
<dbReference type="GO" id="GO:0022625">
    <property type="term" value="C:cytosolic large ribosomal subunit"/>
    <property type="evidence" value="ECO:0007669"/>
    <property type="project" value="TreeGrafter"/>
</dbReference>
<dbReference type="GO" id="GO:0019843">
    <property type="term" value="F:rRNA binding"/>
    <property type="evidence" value="ECO:0007669"/>
    <property type="project" value="UniProtKB-UniRule"/>
</dbReference>
<dbReference type="GO" id="GO:0003735">
    <property type="term" value="F:structural constituent of ribosome"/>
    <property type="evidence" value="ECO:0007669"/>
    <property type="project" value="InterPro"/>
</dbReference>
<dbReference type="GO" id="GO:0006412">
    <property type="term" value="P:translation"/>
    <property type="evidence" value="ECO:0007669"/>
    <property type="project" value="UniProtKB-UniRule"/>
</dbReference>
<dbReference type="CDD" id="cd00336">
    <property type="entry name" value="Ribosomal_L22"/>
    <property type="match status" value="1"/>
</dbReference>
<dbReference type="Gene3D" id="3.90.470.10">
    <property type="entry name" value="Ribosomal protein L22/L17"/>
    <property type="match status" value="1"/>
</dbReference>
<dbReference type="HAMAP" id="MF_01331_B">
    <property type="entry name" value="Ribosomal_uL22_B"/>
    <property type="match status" value="1"/>
</dbReference>
<dbReference type="InterPro" id="IPR001063">
    <property type="entry name" value="Ribosomal_uL22"/>
</dbReference>
<dbReference type="InterPro" id="IPR005727">
    <property type="entry name" value="Ribosomal_uL22_bac/chlpt-type"/>
</dbReference>
<dbReference type="InterPro" id="IPR047867">
    <property type="entry name" value="Ribosomal_uL22_bac/org-type"/>
</dbReference>
<dbReference type="InterPro" id="IPR018260">
    <property type="entry name" value="Ribosomal_uL22_CS"/>
</dbReference>
<dbReference type="InterPro" id="IPR036394">
    <property type="entry name" value="Ribosomal_uL22_sf"/>
</dbReference>
<dbReference type="NCBIfam" id="TIGR01044">
    <property type="entry name" value="rplV_bact"/>
    <property type="match status" value="1"/>
</dbReference>
<dbReference type="PANTHER" id="PTHR13501">
    <property type="entry name" value="CHLOROPLAST 50S RIBOSOMAL PROTEIN L22-RELATED"/>
    <property type="match status" value="1"/>
</dbReference>
<dbReference type="PANTHER" id="PTHR13501:SF8">
    <property type="entry name" value="LARGE RIBOSOMAL SUBUNIT PROTEIN UL22M"/>
    <property type="match status" value="1"/>
</dbReference>
<dbReference type="Pfam" id="PF00237">
    <property type="entry name" value="Ribosomal_L22"/>
    <property type="match status" value="1"/>
</dbReference>
<dbReference type="SUPFAM" id="SSF54843">
    <property type="entry name" value="Ribosomal protein L22"/>
    <property type="match status" value="1"/>
</dbReference>
<dbReference type="PROSITE" id="PS00464">
    <property type="entry name" value="RIBOSOMAL_L22"/>
    <property type="match status" value="1"/>
</dbReference>
<name>RL22_ACIC1</name>
<keyword id="KW-1185">Reference proteome</keyword>
<keyword id="KW-0687">Ribonucleoprotein</keyword>
<keyword id="KW-0689">Ribosomal protein</keyword>
<keyword id="KW-0694">RNA-binding</keyword>
<keyword id="KW-0699">rRNA-binding</keyword>
<organism>
    <name type="scientific">Acidothermus cellulolyticus (strain ATCC 43068 / DSM 8971 / 11B)</name>
    <dbReference type="NCBI Taxonomy" id="351607"/>
    <lineage>
        <taxon>Bacteria</taxon>
        <taxon>Bacillati</taxon>
        <taxon>Actinomycetota</taxon>
        <taxon>Actinomycetes</taxon>
        <taxon>Acidothermales</taxon>
        <taxon>Acidothermaceae</taxon>
        <taxon>Acidothermus</taxon>
    </lineage>
</organism>
<comment type="function">
    <text evidence="1">The globular domain of the protein is located near the polypeptide exit tunnel on the outside of the subunit, while an extended beta-hairpin is found that lines the wall of the exit tunnel in the center of the 70S ribosome.</text>
</comment>
<comment type="function">
    <text evidence="1">This protein binds specifically to 23S rRNA; its binding is stimulated by other ribosomal proteins, e.g. L4, L17, and L20. It is important during the early stages of 50S assembly. It makes multiple contacts with different domains of the 23S rRNA in the assembled 50S subunit and ribosome.</text>
</comment>
<comment type="subunit">
    <text evidence="1">Part of the 50S ribosomal subunit.</text>
</comment>
<comment type="similarity">
    <text evidence="1">Belongs to the universal ribosomal protein uL22 family.</text>
</comment>
<sequence length="281" mass="29253">MASPMGSTASLTGPVVRARARLRYSTITPMKARRVVDLVRGLPADEALTTLQFLPQAASATVYKVLASAIANAQQEAAKQGERLDAEDLVVSAAYVDEGPTLKRFRPRAQGRAYRIRKRTSHITIHVESWPAEAETRATKKAVPKGARHRRRLTGAGKPAASAATETPAAQPVAATTETVEVEAAATAGAPPTVETPVAVASAATETPAATAAETKAGGAAEAEVATTDEQTTETAPAAEAEKPAVRRPAARKSTTSARRRAAETEGHDSDAESTDEGGTR</sequence>